<organism>
    <name type="scientific">Oryza sativa subsp. japonica</name>
    <name type="common">Rice</name>
    <dbReference type="NCBI Taxonomy" id="39947"/>
    <lineage>
        <taxon>Eukaryota</taxon>
        <taxon>Viridiplantae</taxon>
        <taxon>Streptophyta</taxon>
        <taxon>Embryophyta</taxon>
        <taxon>Tracheophyta</taxon>
        <taxon>Spermatophyta</taxon>
        <taxon>Magnoliopsida</taxon>
        <taxon>Liliopsida</taxon>
        <taxon>Poales</taxon>
        <taxon>Poaceae</taxon>
        <taxon>BOP clade</taxon>
        <taxon>Oryzoideae</taxon>
        <taxon>Oryzeae</taxon>
        <taxon>Oryzinae</taxon>
        <taxon>Oryza</taxon>
        <taxon>Oryza sativa</taxon>
    </lineage>
</organism>
<dbReference type="EMBL" id="AP004868">
    <property type="protein sequence ID" value="BAD25576.1"/>
    <property type="molecule type" value="Genomic_DNA"/>
</dbReference>
<dbReference type="EMBL" id="AP008208">
    <property type="protein sequence ID" value="BAF09496.1"/>
    <property type="molecule type" value="Genomic_DNA"/>
</dbReference>
<dbReference type="EMBL" id="AP014958">
    <property type="protein sequence ID" value="BAS80041.1"/>
    <property type="molecule type" value="Genomic_DNA"/>
</dbReference>
<dbReference type="EMBL" id="AK063685">
    <property type="status" value="NOT_ANNOTATED_CDS"/>
    <property type="molecule type" value="mRNA"/>
</dbReference>
<dbReference type="RefSeq" id="XP_015624138.1">
    <property type="nucleotide sequence ID" value="XM_015768652.1"/>
</dbReference>
<dbReference type="SMR" id="Q6H6S3"/>
<dbReference type="STRING" id="39947.Q6H6S3"/>
<dbReference type="PaxDb" id="39947-Q6H6S3"/>
<dbReference type="EnsemblPlants" id="Os02t0649300-01">
    <property type="protein sequence ID" value="Os02t0649300-01"/>
    <property type="gene ID" value="Os02g0649300"/>
</dbReference>
<dbReference type="Gramene" id="Os02t0649300-01">
    <property type="protein sequence ID" value="Os02t0649300-01"/>
    <property type="gene ID" value="Os02g0649300"/>
</dbReference>
<dbReference type="KEGG" id="dosa:Os02g0649300"/>
<dbReference type="eggNOG" id="KOG0483">
    <property type="taxonomic scope" value="Eukaryota"/>
</dbReference>
<dbReference type="HOGENOM" id="CLU_071718_1_0_1"/>
<dbReference type="InParanoid" id="Q6H6S3"/>
<dbReference type="OMA" id="CATPDLW"/>
<dbReference type="OrthoDB" id="6159439at2759"/>
<dbReference type="Proteomes" id="UP000000763">
    <property type="component" value="Chromosome 2"/>
</dbReference>
<dbReference type="Proteomes" id="UP000059680">
    <property type="component" value="Chromosome 2"/>
</dbReference>
<dbReference type="ExpressionAtlas" id="Q6H6S3">
    <property type="expression patterns" value="baseline and differential"/>
</dbReference>
<dbReference type="GO" id="GO:0005634">
    <property type="term" value="C:nucleus"/>
    <property type="evidence" value="ECO:0000318"/>
    <property type="project" value="GO_Central"/>
</dbReference>
<dbReference type="GO" id="GO:0000981">
    <property type="term" value="F:DNA-binding transcription factor activity, RNA polymerase II-specific"/>
    <property type="evidence" value="ECO:0007669"/>
    <property type="project" value="InterPro"/>
</dbReference>
<dbReference type="GO" id="GO:0043565">
    <property type="term" value="F:sequence-specific DNA binding"/>
    <property type="evidence" value="ECO:0000318"/>
    <property type="project" value="GO_Central"/>
</dbReference>
<dbReference type="GO" id="GO:0045893">
    <property type="term" value="P:positive regulation of DNA-templated transcription"/>
    <property type="evidence" value="ECO:0000318"/>
    <property type="project" value="GO_Central"/>
</dbReference>
<dbReference type="CDD" id="cd00086">
    <property type="entry name" value="homeodomain"/>
    <property type="match status" value="1"/>
</dbReference>
<dbReference type="FunFam" id="1.10.10.60:FF:000274">
    <property type="entry name" value="Homeobox-leucine zipper protein HOX24"/>
    <property type="match status" value="1"/>
</dbReference>
<dbReference type="Gene3D" id="1.10.10.60">
    <property type="entry name" value="Homeodomain-like"/>
    <property type="match status" value="1"/>
</dbReference>
<dbReference type="InterPro" id="IPR001356">
    <property type="entry name" value="HD"/>
</dbReference>
<dbReference type="InterPro" id="IPR045224">
    <property type="entry name" value="HDZip_class_I_plant"/>
</dbReference>
<dbReference type="InterPro" id="IPR017970">
    <property type="entry name" value="Homeobox_CS"/>
</dbReference>
<dbReference type="InterPro" id="IPR009057">
    <property type="entry name" value="Homeodomain-like_sf"/>
</dbReference>
<dbReference type="InterPro" id="IPR000047">
    <property type="entry name" value="HTH_motif"/>
</dbReference>
<dbReference type="InterPro" id="IPR003106">
    <property type="entry name" value="Leu_zip_homeo"/>
</dbReference>
<dbReference type="PANTHER" id="PTHR24326">
    <property type="entry name" value="HOMEOBOX-LEUCINE ZIPPER PROTEIN"/>
    <property type="match status" value="1"/>
</dbReference>
<dbReference type="PANTHER" id="PTHR24326:SF341">
    <property type="entry name" value="HOMEOBOX-LEUCINE ZIPPER PROTEIN HOX24"/>
    <property type="match status" value="1"/>
</dbReference>
<dbReference type="Pfam" id="PF02183">
    <property type="entry name" value="HALZ"/>
    <property type="match status" value="1"/>
</dbReference>
<dbReference type="Pfam" id="PF00046">
    <property type="entry name" value="Homeodomain"/>
    <property type="match status" value="1"/>
</dbReference>
<dbReference type="PRINTS" id="PR00031">
    <property type="entry name" value="HTHREPRESSR"/>
</dbReference>
<dbReference type="SMART" id="SM00389">
    <property type="entry name" value="HOX"/>
    <property type="match status" value="1"/>
</dbReference>
<dbReference type="SUPFAM" id="SSF46689">
    <property type="entry name" value="Homeodomain-like"/>
    <property type="match status" value="1"/>
</dbReference>
<dbReference type="PROSITE" id="PS00027">
    <property type="entry name" value="HOMEOBOX_1"/>
    <property type="match status" value="1"/>
</dbReference>
<dbReference type="PROSITE" id="PS50071">
    <property type="entry name" value="HOMEOBOX_2"/>
    <property type="match status" value="1"/>
</dbReference>
<gene>
    <name type="primary">HOX24</name>
    <name type="ordered locus">Os02g0649300</name>
    <name type="ordered locus">LOC_Os02g43330</name>
    <name type="ORF">P0048B08.20</name>
</gene>
<proteinExistence type="evidence at transcript level"/>
<reference key="1">
    <citation type="journal article" date="2005" name="Nature">
        <title>The map-based sequence of the rice genome.</title>
        <authorList>
            <consortium name="International rice genome sequencing project (IRGSP)"/>
        </authorList>
    </citation>
    <scope>NUCLEOTIDE SEQUENCE [LARGE SCALE GENOMIC DNA]</scope>
    <source>
        <strain>cv. Nipponbare</strain>
    </source>
</reference>
<reference key="2">
    <citation type="journal article" date="2008" name="Nucleic Acids Res.">
        <title>The rice annotation project database (RAP-DB): 2008 update.</title>
        <authorList>
            <consortium name="The rice annotation project (RAP)"/>
        </authorList>
    </citation>
    <scope>GENOME REANNOTATION</scope>
    <source>
        <strain>cv. Nipponbare</strain>
    </source>
</reference>
<reference key="3">
    <citation type="journal article" date="2013" name="Rice">
        <title>Improvement of the Oryza sativa Nipponbare reference genome using next generation sequence and optical map data.</title>
        <authorList>
            <person name="Kawahara Y."/>
            <person name="de la Bastide M."/>
            <person name="Hamilton J.P."/>
            <person name="Kanamori H."/>
            <person name="McCombie W.R."/>
            <person name="Ouyang S."/>
            <person name="Schwartz D.C."/>
            <person name="Tanaka T."/>
            <person name="Wu J."/>
            <person name="Zhou S."/>
            <person name="Childs K.L."/>
            <person name="Davidson R.M."/>
            <person name="Lin H."/>
            <person name="Quesada-Ocampo L."/>
            <person name="Vaillancourt B."/>
            <person name="Sakai H."/>
            <person name="Lee S.S."/>
            <person name="Kim J."/>
            <person name="Numa H."/>
            <person name="Itoh T."/>
            <person name="Buell C.R."/>
            <person name="Matsumoto T."/>
        </authorList>
    </citation>
    <scope>GENOME REANNOTATION</scope>
    <source>
        <strain>cv. Nipponbare</strain>
    </source>
</reference>
<reference key="4">
    <citation type="journal article" date="2003" name="Science">
        <title>Collection, mapping, and annotation of over 28,000 cDNA clones from japonica rice.</title>
        <authorList>
            <consortium name="The rice full-length cDNA consortium"/>
        </authorList>
    </citation>
    <scope>NUCLEOTIDE SEQUENCE [LARGE SCALE MRNA]</scope>
    <source>
        <strain>cv. Nipponbare</strain>
    </source>
</reference>
<reference key="5">
    <citation type="journal article" date="2008" name="Plant Mol. Biol.">
        <title>A genome-wide survey of HD-Zip genes in rice and analysis of drought-responsive family members.</title>
        <authorList>
            <person name="Agalou A."/>
            <person name="Purwantomo S."/>
            <person name="Oevernaes E."/>
            <person name="Johannesson H."/>
            <person name="Zhu X."/>
            <person name="Estiati A."/>
            <person name="de Kam R.J."/>
            <person name="Engstroem P."/>
            <person name="Slamet-Loedin I.H."/>
            <person name="Zhu Z."/>
            <person name="Wang M."/>
            <person name="Xiong L."/>
            <person name="Meijer A.H."/>
            <person name="Ouwerkerk P.B.F."/>
        </authorList>
    </citation>
    <scope>TISSUE SPECIFICITY</scope>
    <scope>INDUCTION</scope>
    <scope>GENE FAMILY</scope>
    <scope>NOMENCLATURE</scope>
</reference>
<sequence>MESDCQFLVAPPQPHMYYDTAAAAVDEAQFLRQMVAAADHHAAAAGRGGGDGDGGGGGGGGGERKRRFTEEQVRSLETTFHARRAKLEPREKAELARELGLQPRQVAIWFQNKRARWRSKQIEHDYAALRAQYDALHARVESLRQEKLALADQVDELRGKLNERQDQSGSCDGGGAEGDDDDKRNSVMNASSSGLVEEDYVSCLAVPVVDVSEDGSAACGGSSYEYDHHLDYLGGGQLPDPFCGMPDLWEIWPMVEWNAVA</sequence>
<evidence type="ECO:0000250" key="1"/>
<evidence type="ECO:0000255" key="2">
    <source>
        <dbReference type="PROSITE-ProRule" id="PRU00108"/>
    </source>
</evidence>
<evidence type="ECO:0000256" key="3">
    <source>
        <dbReference type="SAM" id="MobiDB-lite"/>
    </source>
</evidence>
<evidence type="ECO:0000269" key="4">
    <source>
    </source>
</evidence>
<evidence type="ECO:0000305" key="5"/>
<protein>
    <recommendedName>
        <fullName>Homeobox-leucine zipper protein HOX24</fullName>
    </recommendedName>
    <alternativeName>
        <fullName>HD-ZIP protein HOX24</fullName>
    </alternativeName>
    <alternativeName>
        <fullName>Homeodomain transcription factor HOX24</fullName>
    </alternativeName>
    <alternativeName>
        <fullName>OsHox24</fullName>
    </alternativeName>
</protein>
<name>HOX24_ORYSJ</name>
<comment type="function">
    <text evidence="1">Probable transcription factor.</text>
</comment>
<comment type="subcellular location">
    <subcellularLocation>
        <location evidence="5">Nucleus</location>
    </subcellularLocation>
</comment>
<comment type="tissue specificity">
    <text evidence="4">Expressed in roots and panicles.</text>
</comment>
<comment type="induction">
    <text evidence="4">In leaves by drought stress.</text>
</comment>
<comment type="similarity">
    <text evidence="5">Belongs to the HD-ZIP homeobox family. Class I subfamily.</text>
</comment>
<feature type="chain" id="PRO_0000331721" description="Homeobox-leucine zipper protein HOX24">
    <location>
        <begin position="1"/>
        <end position="261"/>
    </location>
</feature>
<feature type="DNA-binding region" description="Homeobox" evidence="2">
    <location>
        <begin position="61"/>
        <end position="121"/>
    </location>
</feature>
<feature type="region of interest" description="Disordered" evidence="3">
    <location>
        <begin position="42"/>
        <end position="67"/>
    </location>
</feature>
<feature type="region of interest" description="Leucine-zipper">
    <location>
        <begin position="120"/>
        <end position="164"/>
    </location>
</feature>
<feature type="region of interest" description="Disordered" evidence="3">
    <location>
        <begin position="160"/>
        <end position="188"/>
    </location>
</feature>
<feature type="compositionally biased region" description="Gly residues" evidence="3">
    <location>
        <begin position="46"/>
        <end position="61"/>
    </location>
</feature>
<keyword id="KW-0238">DNA-binding</keyword>
<keyword id="KW-0371">Homeobox</keyword>
<keyword id="KW-0539">Nucleus</keyword>
<keyword id="KW-1185">Reference proteome</keyword>
<keyword id="KW-0804">Transcription</keyword>
<keyword id="KW-0805">Transcription regulation</keyword>
<accession>Q6H6S3</accession>